<evidence type="ECO:0000255" key="1">
    <source>
        <dbReference type="HAMAP-Rule" id="MF_00065"/>
    </source>
</evidence>
<feature type="chain" id="PRO_1000075089" description="Adenylyl-sulfate kinase">
    <location>
        <begin position="1"/>
        <end position="205"/>
    </location>
</feature>
<feature type="active site" description="Phosphoserine intermediate" evidence="1">
    <location>
        <position position="105"/>
    </location>
</feature>
<feature type="binding site" evidence="1">
    <location>
        <begin position="31"/>
        <end position="38"/>
    </location>
    <ligand>
        <name>ATP</name>
        <dbReference type="ChEBI" id="CHEBI:30616"/>
    </ligand>
</feature>
<reference key="1">
    <citation type="submission" date="2007-11" db="EMBL/GenBank/DDBJ databases">
        <title>Complete sequence of chromosome of Shewanella baltica OS195.</title>
        <authorList>
            <consortium name="US DOE Joint Genome Institute"/>
            <person name="Copeland A."/>
            <person name="Lucas S."/>
            <person name="Lapidus A."/>
            <person name="Barry K."/>
            <person name="Glavina del Rio T."/>
            <person name="Dalin E."/>
            <person name="Tice H."/>
            <person name="Pitluck S."/>
            <person name="Chain P."/>
            <person name="Malfatti S."/>
            <person name="Shin M."/>
            <person name="Vergez L."/>
            <person name="Schmutz J."/>
            <person name="Larimer F."/>
            <person name="Land M."/>
            <person name="Hauser L."/>
            <person name="Kyrpides N."/>
            <person name="Kim E."/>
            <person name="Brettar I."/>
            <person name="Rodrigues J."/>
            <person name="Konstantinidis K."/>
            <person name="Klappenbach J."/>
            <person name="Hofle M."/>
            <person name="Tiedje J."/>
            <person name="Richardson P."/>
        </authorList>
    </citation>
    <scope>NUCLEOTIDE SEQUENCE [LARGE SCALE GENOMIC DNA]</scope>
    <source>
        <strain>OS195</strain>
    </source>
</reference>
<keyword id="KW-0067">ATP-binding</keyword>
<keyword id="KW-0418">Kinase</keyword>
<keyword id="KW-0547">Nucleotide-binding</keyword>
<keyword id="KW-0597">Phosphoprotein</keyword>
<keyword id="KW-0808">Transferase</keyword>
<name>CYSC_SHEB9</name>
<sequence>MTNIVWHQHPVDQAARAEQKGQNPVLLWFTGLSGAGKSTLAGALERALFEAGFHTYLLDGDNVRHGLCKDLGFTVEDRDENLRRVGEVAKLMVDAGLVVLSAFISPTREERDSIRARFPVSQFIEVHVSTPLSVCEQRDPKGLYVKARSGEISNFTGISSPYEAPLAAELTIDTSKGDLVTQVRALIDYLTAINVINADKAKALA</sequence>
<comment type="function">
    <text evidence="1">Catalyzes the synthesis of activated sulfate.</text>
</comment>
<comment type="catalytic activity">
    <reaction evidence="1">
        <text>adenosine 5'-phosphosulfate + ATP = 3'-phosphoadenylyl sulfate + ADP + H(+)</text>
        <dbReference type="Rhea" id="RHEA:24152"/>
        <dbReference type="ChEBI" id="CHEBI:15378"/>
        <dbReference type="ChEBI" id="CHEBI:30616"/>
        <dbReference type="ChEBI" id="CHEBI:58243"/>
        <dbReference type="ChEBI" id="CHEBI:58339"/>
        <dbReference type="ChEBI" id="CHEBI:456216"/>
        <dbReference type="EC" id="2.7.1.25"/>
    </reaction>
</comment>
<comment type="pathway">
    <text evidence="1">Sulfur metabolism; hydrogen sulfide biosynthesis; sulfite from sulfate: step 2/3.</text>
</comment>
<comment type="similarity">
    <text evidence="1">Belongs to the APS kinase family.</text>
</comment>
<gene>
    <name evidence="1" type="primary">cysC</name>
    <name type="ordered locus">Sbal195_0965</name>
</gene>
<proteinExistence type="inferred from homology"/>
<protein>
    <recommendedName>
        <fullName evidence="1">Adenylyl-sulfate kinase</fullName>
        <ecNumber evidence="1">2.7.1.25</ecNumber>
    </recommendedName>
    <alternativeName>
        <fullName evidence="1">APS kinase</fullName>
    </alternativeName>
    <alternativeName>
        <fullName evidence="1">ATP adenosine-5'-phosphosulfate 3'-phosphotransferase</fullName>
    </alternativeName>
    <alternativeName>
        <fullName evidence="1">Adenosine-5'-phosphosulfate kinase</fullName>
    </alternativeName>
</protein>
<dbReference type="EC" id="2.7.1.25" evidence="1"/>
<dbReference type="EMBL" id="CP000891">
    <property type="protein sequence ID" value="ABX48141.1"/>
    <property type="molecule type" value="Genomic_DNA"/>
</dbReference>
<dbReference type="RefSeq" id="WP_006085921.1">
    <property type="nucleotide sequence ID" value="NC_009997.1"/>
</dbReference>
<dbReference type="SMR" id="A9L392"/>
<dbReference type="GeneID" id="11771264"/>
<dbReference type="KEGG" id="sbn:Sbal195_0965"/>
<dbReference type="HOGENOM" id="CLU_046932_1_0_6"/>
<dbReference type="UniPathway" id="UPA00140">
    <property type="reaction ID" value="UER00205"/>
</dbReference>
<dbReference type="Proteomes" id="UP000000770">
    <property type="component" value="Chromosome"/>
</dbReference>
<dbReference type="GO" id="GO:0004020">
    <property type="term" value="F:adenylylsulfate kinase activity"/>
    <property type="evidence" value="ECO:0007669"/>
    <property type="project" value="UniProtKB-UniRule"/>
</dbReference>
<dbReference type="GO" id="GO:0005524">
    <property type="term" value="F:ATP binding"/>
    <property type="evidence" value="ECO:0007669"/>
    <property type="project" value="UniProtKB-UniRule"/>
</dbReference>
<dbReference type="GO" id="GO:0070814">
    <property type="term" value="P:hydrogen sulfide biosynthetic process"/>
    <property type="evidence" value="ECO:0007669"/>
    <property type="project" value="UniProtKB-UniRule"/>
</dbReference>
<dbReference type="GO" id="GO:0000103">
    <property type="term" value="P:sulfate assimilation"/>
    <property type="evidence" value="ECO:0007669"/>
    <property type="project" value="UniProtKB-UniRule"/>
</dbReference>
<dbReference type="CDD" id="cd02027">
    <property type="entry name" value="APSK"/>
    <property type="match status" value="1"/>
</dbReference>
<dbReference type="FunFam" id="3.40.50.300:FF:000212">
    <property type="entry name" value="Adenylyl-sulfate kinase"/>
    <property type="match status" value="1"/>
</dbReference>
<dbReference type="Gene3D" id="3.40.50.300">
    <property type="entry name" value="P-loop containing nucleotide triphosphate hydrolases"/>
    <property type="match status" value="1"/>
</dbReference>
<dbReference type="HAMAP" id="MF_00065">
    <property type="entry name" value="Adenylyl_sulf_kinase"/>
    <property type="match status" value="1"/>
</dbReference>
<dbReference type="InterPro" id="IPR002891">
    <property type="entry name" value="APS_kinase"/>
</dbReference>
<dbReference type="InterPro" id="IPR027417">
    <property type="entry name" value="P-loop_NTPase"/>
</dbReference>
<dbReference type="NCBIfam" id="TIGR00455">
    <property type="entry name" value="apsK"/>
    <property type="match status" value="1"/>
</dbReference>
<dbReference type="NCBIfam" id="NF003013">
    <property type="entry name" value="PRK03846.1"/>
    <property type="match status" value="1"/>
</dbReference>
<dbReference type="PANTHER" id="PTHR11055:SF63">
    <property type="entry name" value="ADENYLYL-SULFATE KINASE 1, CHLOROPLASTIC"/>
    <property type="match status" value="1"/>
</dbReference>
<dbReference type="PANTHER" id="PTHR11055">
    <property type="entry name" value="BIFUNCTIONAL 3'-PHOSPHOADENOSINE 5'-PHOSPHOSULFATE SYNTHASE"/>
    <property type="match status" value="1"/>
</dbReference>
<dbReference type="Pfam" id="PF01583">
    <property type="entry name" value="APS_kinase"/>
    <property type="match status" value="1"/>
</dbReference>
<dbReference type="SUPFAM" id="SSF52540">
    <property type="entry name" value="P-loop containing nucleoside triphosphate hydrolases"/>
    <property type="match status" value="1"/>
</dbReference>
<organism>
    <name type="scientific">Shewanella baltica (strain OS195)</name>
    <dbReference type="NCBI Taxonomy" id="399599"/>
    <lineage>
        <taxon>Bacteria</taxon>
        <taxon>Pseudomonadati</taxon>
        <taxon>Pseudomonadota</taxon>
        <taxon>Gammaproteobacteria</taxon>
        <taxon>Alteromonadales</taxon>
        <taxon>Shewanellaceae</taxon>
        <taxon>Shewanella</taxon>
    </lineage>
</organism>
<accession>A9L392</accession>